<evidence type="ECO:0000255" key="1">
    <source>
        <dbReference type="HAMAP-Rule" id="MF_00033"/>
    </source>
</evidence>
<organism>
    <name type="scientific">Shewanella baltica (strain OS185)</name>
    <dbReference type="NCBI Taxonomy" id="402882"/>
    <lineage>
        <taxon>Bacteria</taxon>
        <taxon>Pseudomonadati</taxon>
        <taxon>Pseudomonadota</taxon>
        <taxon>Gammaproteobacteria</taxon>
        <taxon>Alteromonadales</taxon>
        <taxon>Shewanellaceae</taxon>
        <taxon>Shewanella</taxon>
    </lineage>
</organism>
<comment type="function">
    <text evidence="1">Cell wall formation. Catalyzes the transfer of a GlcNAc subunit on undecaprenyl-pyrophosphoryl-MurNAc-pentapeptide (lipid intermediate I) to form undecaprenyl-pyrophosphoryl-MurNAc-(pentapeptide)GlcNAc (lipid intermediate II).</text>
</comment>
<comment type="catalytic activity">
    <reaction evidence="1">
        <text>di-trans,octa-cis-undecaprenyl diphospho-N-acetyl-alpha-D-muramoyl-L-alanyl-D-glutamyl-meso-2,6-diaminopimeloyl-D-alanyl-D-alanine + UDP-N-acetyl-alpha-D-glucosamine = di-trans,octa-cis-undecaprenyl diphospho-[N-acetyl-alpha-D-glucosaminyl-(1-&gt;4)]-N-acetyl-alpha-D-muramoyl-L-alanyl-D-glutamyl-meso-2,6-diaminopimeloyl-D-alanyl-D-alanine + UDP + H(+)</text>
        <dbReference type="Rhea" id="RHEA:31227"/>
        <dbReference type="ChEBI" id="CHEBI:15378"/>
        <dbReference type="ChEBI" id="CHEBI:57705"/>
        <dbReference type="ChEBI" id="CHEBI:58223"/>
        <dbReference type="ChEBI" id="CHEBI:61387"/>
        <dbReference type="ChEBI" id="CHEBI:61388"/>
        <dbReference type="EC" id="2.4.1.227"/>
    </reaction>
</comment>
<comment type="pathway">
    <text evidence="1">Cell wall biogenesis; peptidoglycan biosynthesis.</text>
</comment>
<comment type="subcellular location">
    <subcellularLocation>
        <location evidence="1">Cell inner membrane</location>
        <topology evidence="1">Peripheral membrane protein</topology>
        <orientation evidence="1">Cytoplasmic side</orientation>
    </subcellularLocation>
</comment>
<comment type="similarity">
    <text evidence="1">Belongs to the glycosyltransferase 28 family. MurG subfamily.</text>
</comment>
<proteinExistence type="inferred from homology"/>
<reference key="1">
    <citation type="submission" date="2007-07" db="EMBL/GenBank/DDBJ databases">
        <title>Complete sequence of chromosome of Shewanella baltica OS185.</title>
        <authorList>
            <consortium name="US DOE Joint Genome Institute"/>
            <person name="Copeland A."/>
            <person name="Lucas S."/>
            <person name="Lapidus A."/>
            <person name="Barry K."/>
            <person name="Glavina del Rio T."/>
            <person name="Dalin E."/>
            <person name="Tice H."/>
            <person name="Pitluck S."/>
            <person name="Sims D."/>
            <person name="Brettin T."/>
            <person name="Bruce D."/>
            <person name="Detter J.C."/>
            <person name="Han C."/>
            <person name="Schmutz J."/>
            <person name="Larimer F."/>
            <person name="Land M."/>
            <person name="Hauser L."/>
            <person name="Kyrpides N."/>
            <person name="Mikhailova N."/>
            <person name="Brettar I."/>
            <person name="Rodrigues J."/>
            <person name="Konstantinidis K."/>
            <person name="Tiedje J."/>
            <person name="Richardson P."/>
        </authorList>
    </citation>
    <scope>NUCLEOTIDE SEQUENCE [LARGE SCALE GENOMIC DNA]</scope>
    <source>
        <strain>OS185</strain>
    </source>
</reference>
<dbReference type="EC" id="2.4.1.227" evidence="1"/>
<dbReference type="EMBL" id="CP000753">
    <property type="protein sequence ID" value="ABS06570.1"/>
    <property type="molecule type" value="Genomic_DNA"/>
</dbReference>
<dbReference type="RefSeq" id="WP_006086700.1">
    <property type="nucleotide sequence ID" value="NC_009665.1"/>
</dbReference>
<dbReference type="SMR" id="A6WID1"/>
<dbReference type="CAZy" id="GT28">
    <property type="family name" value="Glycosyltransferase Family 28"/>
</dbReference>
<dbReference type="GeneID" id="11770751"/>
<dbReference type="KEGG" id="sbm:Shew185_0401"/>
<dbReference type="HOGENOM" id="CLU_037404_2_0_6"/>
<dbReference type="UniPathway" id="UPA00219"/>
<dbReference type="GO" id="GO:0005886">
    <property type="term" value="C:plasma membrane"/>
    <property type="evidence" value="ECO:0007669"/>
    <property type="project" value="UniProtKB-SubCell"/>
</dbReference>
<dbReference type="GO" id="GO:0051991">
    <property type="term" value="F:UDP-N-acetyl-D-glucosamine:N-acetylmuramoyl-L-alanyl-D-glutamyl-meso-2,6-diaminopimelyl-D-alanyl-D-alanine-diphosphoundecaprenol 4-beta-N-acetylglucosaminlytransferase activity"/>
    <property type="evidence" value="ECO:0007669"/>
    <property type="project" value="RHEA"/>
</dbReference>
<dbReference type="GO" id="GO:0050511">
    <property type="term" value="F:undecaprenyldiphospho-muramoylpentapeptide beta-N-acetylglucosaminyltransferase activity"/>
    <property type="evidence" value="ECO:0007669"/>
    <property type="project" value="UniProtKB-UniRule"/>
</dbReference>
<dbReference type="GO" id="GO:0005975">
    <property type="term" value="P:carbohydrate metabolic process"/>
    <property type="evidence" value="ECO:0007669"/>
    <property type="project" value="InterPro"/>
</dbReference>
<dbReference type="GO" id="GO:0051301">
    <property type="term" value="P:cell division"/>
    <property type="evidence" value="ECO:0007669"/>
    <property type="project" value="UniProtKB-KW"/>
</dbReference>
<dbReference type="GO" id="GO:0071555">
    <property type="term" value="P:cell wall organization"/>
    <property type="evidence" value="ECO:0007669"/>
    <property type="project" value="UniProtKB-KW"/>
</dbReference>
<dbReference type="GO" id="GO:0030259">
    <property type="term" value="P:lipid glycosylation"/>
    <property type="evidence" value="ECO:0007669"/>
    <property type="project" value="UniProtKB-UniRule"/>
</dbReference>
<dbReference type="GO" id="GO:0009252">
    <property type="term" value="P:peptidoglycan biosynthetic process"/>
    <property type="evidence" value="ECO:0007669"/>
    <property type="project" value="UniProtKB-UniRule"/>
</dbReference>
<dbReference type="GO" id="GO:0008360">
    <property type="term" value="P:regulation of cell shape"/>
    <property type="evidence" value="ECO:0007669"/>
    <property type="project" value="UniProtKB-KW"/>
</dbReference>
<dbReference type="CDD" id="cd03785">
    <property type="entry name" value="GT28_MurG"/>
    <property type="match status" value="1"/>
</dbReference>
<dbReference type="Gene3D" id="3.40.50.2000">
    <property type="entry name" value="Glycogen Phosphorylase B"/>
    <property type="match status" value="2"/>
</dbReference>
<dbReference type="HAMAP" id="MF_00033">
    <property type="entry name" value="MurG"/>
    <property type="match status" value="1"/>
</dbReference>
<dbReference type="InterPro" id="IPR006009">
    <property type="entry name" value="GlcNAc_MurG"/>
</dbReference>
<dbReference type="InterPro" id="IPR007235">
    <property type="entry name" value="Glyco_trans_28_C"/>
</dbReference>
<dbReference type="InterPro" id="IPR004276">
    <property type="entry name" value="GlycoTrans_28_N"/>
</dbReference>
<dbReference type="NCBIfam" id="TIGR01133">
    <property type="entry name" value="murG"/>
    <property type="match status" value="1"/>
</dbReference>
<dbReference type="PANTHER" id="PTHR21015:SF22">
    <property type="entry name" value="GLYCOSYLTRANSFERASE"/>
    <property type="match status" value="1"/>
</dbReference>
<dbReference type="PANTHER" id="PTHR21015">
    <property type="entry name" value="UDP-N-ACETYLGLUCOSAMINE--N-ACETYLMURAMYL-(PENTAPEPTIDE) PYROPHOSPHORYL-UNDECAPRENOL N-ACETYLGLUCOSAMINE TRANSFERASE 1"/>
    <property type="match status" value="1"/>
</dbReference>
<dbReference type="Pfam" id="PF04101">
    <property type="entry name" value="Glyco_tran_28_C"/>
    <property type="match status" value="1"/>
</dbReference>
<dbReference type="Pfam" id="PF03033">
    <property type="entry name" value="Glyco_transf_28"/>
    <property type="match status" value="1"/>
</dbReference>
<dbReference type="SUPFAM" id="SSF53756">
    <property type="entry name" value="UDP-Glycosyltransferase/glycogen phosphorylase"/>
    <property type="match status" value="1"/>
</dbReference>
<gene>
    <name evidence="1" type="primary">murG</name>
    <name type="ordered locus">Shew185_0401</name>
</gene>
<feature type="chain" id="PRO_1000002687" description="UDP-N-acetylglucosamine--N-acetylmuramyl-(pentapeptide) pyrophosphoryl-undecaprenol N-acetylglucosamine transferase">
    <location>
        <begin position="1"/>
        <end position="362"/>
    </location>
</feature>
<feature type="binding site" evidence="1">
    <location>
        <begin position="15"/>
        <end position="17"/>
    </location>
    <ligand>
        <name>UDP-N-acetyl-alpha-D-glucosamine</name>
        <dbReference type="ChEBI" id="CHEBI:57705"/>
    </ligand>
</feature>
<feature type="binding site" evidence="1">
    <location>
        <position position="127"/>
    </location>
    <ligand>
        <name>UDP-N-acetyl-alpha-D-glucosamine</name>
        <dbReference type="ChEBI" id="CHEBI:57705"/>
    </ligand>
</feature>
<feature type="binding site" evidence="1">
    <location>
        <position position="165"/>
    </location>
    <ligand>
        <name>UDP-N-acetyl-alpha-D-glucosamine</name>
        <dbReference type="ChEBI" id="CHEBI:57705"/>
    </ligand>
</feature>
<feature type="binding site" evidence="1">
    <location>
        <position position="191"/>
    </location>
    <ligand>
        <name>UDP-N-acetyl-alpha-D-glucosamine</name>
        <dbReference type="ChEBI" id="CHEBI:57705"/>
    </ligand>
</feature>
<feature type="binding site" evidence="1">
    <location>
        <position position="247"/>
    </location>
    <ligand>
        <name>UDP-N-acetyl-alpha-D-glucosamine</name>
        <dbReference type="ChEBI" id="CHEBI:57705"/>
    </ligand>
</feature>
<feature type="binding site" evidence="1">
    <location>
        <begin position="266"/>
        <end position="271"/>
    </location>
    <ligand>
        <name>UDP-N-acetyl-alpha-D-glucosamine</name>
        <dbReference type="ChEBI" id="CHEBI:57705"/>
    </ligand>
</feature>
<feature type="binding site" evidence="1">
    <location>
        <position position="292"/>
    </location>
    <ligand>
        <name>UDP-N-acetyl-alpha-D-glucosamine</name>
        <dbReference type="ChEBI" id="CHEBI:57705"/>
    </ligand>
</feature>
<name>MURG_SHEB8</name>
<sequence length="362" mass="38311">MTPAGKRILVMAGGTGGHVFPALAVAKYLAQQGWQVRWLGTADRMEARLVPQYGFDIDFIDIKGVRGNGLIRKLAAPFKVVRSILQAKAVIAEFKPDVVLGMGGFASGPGGVAARLAGIPLVLHEQNAIPGMTNKLLSRIATQVLCAFKNTFTTVKAKVVGNPIRQELIALGAQPKPEADKALKVLVVGGSLGAKVFNDLMPEAVAILSQQQSVTVWHQVGKDNLAGVKAAYQQHGQDGGVNIAEFIDDMEAAYRWADVVLCRAGALTVSELAAVGLPSILVPYPHAVDDHQTRNGQVLVEAGAAFLLPQAILDVNKLAGKLQLLANDRTELARMGQRARDVAVLDATEQVAAVCISLAEKG</sequence>
<accession>A6WID1</accession>
<protein>
    <recommendedName>
        <fullName evidence="1">UDP-N-acetylglucosamine--N-acetylmuramyl-(pentapeptide) pyrophosphoryl-undecaprenol N-acetylglucosamine transferase</fullName>
        <ecNumber evidence="1">2.4.1.227</ecNumber>
    </recommendedName>
    <alternativeName>
        <fullName evidence="1">Undecaprenyl-PP-MurNAc-pentapeptide-UDPGlcNAc GlcNAc transferase</fullName>
    </alternativeName>
</protein>
<keyword id="KW-0131">Cell cycle</keyword>
<keyword id="KW-0132">Cell division</keyword>
<keyword id="KW-0997">Cell inner membrane</keyword>
<keyword id="KW-1003">Cell membrane</keyword>
<keyword id="KW-0133">Cell shape</keyword>
<keyword id="KW-0961">Cell wall biogenesis/degradation</keyword>
<keyword id="KW-0328">Glycosyltransferase</keyword>
<keyword id="KW-0472">Membrane</keyword>
<keyword id="KW-0573">Peptidoglycan synthesis</keyword>
<keyword id="KW-0808">Transferase</keyword>